<sequence>MTAVQLIVGLGNPGPEYDQTRHNAGALFVERLAHAQGVSLVADRKYFGLVGKFSHQGKDVRLLIPTTYMNRSGQSVAALAGFFRIAPDAILVAHDELDMPPGVAKLKTGGGHGGHNGLRDIIAQLGNQNSFHRLRLGIGHPGHSSLVSGYVLGRAPRSEQELLDTSIDFALGVLPEMLAGDWTRAMQKLHSQKA</sequence>
<accession>Q02G02</accession>
<reference key="1">
    <citation type="journal article" date="2006" name="Genome Biol.">
        <title>Genomic analysis reveals that Pseudomonas aeruginosa virulence is combinatorial.</title>
        <authorList>
            <person name="Lee D.G."/>
            <person name="Urbach J.M."/>
            <person name="Wu G."/>
            <person name="Liberati N.T."/>
            <person name="Feinbaum R.L."/>
            <person name="Miyata S."/>
            <person name="Diggins L.T."/>
            <person name="He J."/>
            <person name="Saucier M."/>
            <person name="Deziel E."/>
            <person name="Friedman L."/>
            <person name="Li L."/>
            <person name="Grills G."/>
            <person name="Montgomery K."/>
            <person name="Kucherlapati R."/>
            <person name="Rahme L.G."/>
            <person name="Ausubel F.M."/>
        </authorList>
    </citation>
    <scope>NUCLEOTIDE SEQUENCE [LARGE SCALE GENOMIC DNA]</scope>
    <source>
        <strain>UCBPP-PA14</strain>
    </source>
</reference>
<reference key="2">
    <citation type="journal article" date="2013" name="Antimicrob. Agents Chemother.">
        <title>Recycling of peptidyl-tRNAs by peptidyl-tRNA hydrolase counteracts azithromycin-mediated effects on Pseudomonas aeruginosa.</title>
        <authorList>
            <person name="Goedeke J."/>
            <person name="Pustelny C."/>
            <person name="Haeussler S."/>
        </authorList>
    </citation>
    <scope>FUNCTION</scope>
    <source>
        <strain>UCBPP-PA14</strain>
    </source>
</reference>
<comment type="function">
    <text evidence="1">Hydrolyzes ribosome-free peptidyl-tRNAs (with 1 or more amino acids incorporated), which drop off the ribosome during protein synthesis, or as a result of ribosome stalling.</text>
</comment>
<comment type="function">
    <text evidence="1">Catalyzes the release of premature peptidyl moieties from peptidyl-tRNA molecules trapped in stalled 50S ribosomal subunits, and thus maintains levels of free tRNAs and 50S ribosomes.</text>
</comment>
<comment type="function">
    <text evidence="2">Overexpression in situ leads to increased levels of uncharged tRNAs, increased production of rhamnolipid and pyocyanin, decreases low level azithromycin (AZM)-mediated killing of bacteria and derepresses swarming motility in cells treated with low levels of AZM (2 ug/ml and 5 ug/ml). Treatment with 2 ug/ml AZM increases cytotoxicity in human (A549 lung adenocarcinoma cell line). Depletion of tRNA pools by AZM seems to affect the translation of proteins that use rare tRNA isoacceptors, and in part probably mediates the selective activity os AZM on infectious Pseudomonas.</text>
</comment>
<comment type="catalytic activity">
    <reaction evidence="1">
        <text>an N-acyl-L-alpha-aminoacyl-tRNA + H2O = an N-acyl-L-amino acid + a tRNA + H(+)</text>
        <dbReference type="Rhea" id="RHEA:54448"/>
        <dbReference type="Rhea" id="RHEA-COMP:10123"/>
        <dbReference type="Rhea" id="RHEA-COMP:13883"/>
        <dbReference type="ChEBI" id="CHEBI:15377"/>
        <dbReference type="ChEBI" id="CHEBI:15378"/>
        <dbReference type="ChEBI" id="CHEBI:59874"/>
        <dbReference type="ChEBI" id="CHEBI:78442"/>
        <dbReference type="ChEBI" id="CHEBI:138191"/>
        <dbReference type="EC" id="3.1.1.29"/>
    </reaction>
</comment>
<comment type="subunit">
    <text evidence="1">Monomer.</text>
</comment>
<comment type="subcellular location">
    <subcellularLocation>
        <location evidence="1">Cytoplasm</location>
    </subcellularLocation>
</comment>
<comment type="miscellaneous">
    <text evidence="3">Cystic fibrosis patients with P.aeruginosa infections benefit from treatment with low levels of the macrolide antibiotic azithromycin (AZM).</text>
</comment>
<comment type="similarity">
    <text evidence="1">Belongs to the PTH family.</text>
</comment>
<name>PTH_PSEAB</name>
<evidence type="ECO:0000255" key="1">
    <source>
        <dbReference type="HAMAP-Rule" id="MF_00083"/>
    </source>
</evidence>
<evidence type="ECO:0000269" key="2">
    <source>
    </source>
</evidence>
<evidence type="ECO:0000303" key="3">
    <source>
    </source>
</evidence>
<dbReference type="EC" id="3.1.1.29" evidence="1"/>
<dbReference type="EMBL" id="CP000438">
    <property type="protein sequence ID" value="ABJ14053.1"/>
    <property type="molecule type" value="Genomic_DNA"/>
</dbReference>
<dbReference type="RefSeq" id="WP_003099278.1">
    <property type="nucleotide sequence ID" value="NZ_CP034244.1"/>
</dbReference>
<dbReference type="SMR" id="Q02G02"/>
<dbReference type="KEGG" id="pau:PA14_61790"/>
<dbReference type="PseudoCAP" id="PA14_61790"/>
<dbReference type="HOGENOM" id="CLU_062456_3_1_6"/>
<dbReference type="BioCyc" id="PAER208963:G1G74-5224-MONOMER"/>
<dbReference type="Proteomes" id="UP000000653">
    <property type="component" value="Chromosome"/>
</dbReference>
<dbReference type="GO" id="GO:0005737">
    <property type="term" value="C:cytoplasm"/>
    <property type="evidence" value="ECO:0007669"/>
    <property type="project" value="UniProtKB-SubCell"/>
</dbReference>
<dbReference type="GO" id="GO:0004045">
    <property type="term" value="F:peptidyl-tRNA hydrolase activity"/>
    <property type="evidence" value="ECO:0007669"/>
    <property type="project" value="UniProtKB-UniRule"/>
</dbReference>
<dbReference type="GO" id="GO:0000049">
    <property type="term" value="F:tRNA binding"/>
    <property type="evidence" value="ECO:0007669"/>
    <property type="project" value="UniProtKB-UniRule"/>
</dbReference>
<dbReference type="GO" id="GO:0006515">
    <property type="term" value="P:protein quality control for misfolded or incompletely synthesized proteins"/>
    <property type="evidence" value="ECO:0007669"/>
    <property type="project" value="UniProtKB-UniRule"/>
</dbReference>
<dbReference type="GO" id="GO:0072344">
    <property type="term" value="P:rescue of stalled ribosome"/>
    <property type="evidence" value="ECO:0007669"/>
    <property type="project" value="UniProtKB-UniRule"/>
</dbReference>
<dbReference type="CDD" id="cd00462">
    <property type="entry name" value="PTH"/>
    <property type="match status" value="1"/>
</dbReference>
<dbReference type="FunFam" id="3.40.50.1470:FF:000001">
    <property type="entry name" value="Peptidyl-tRNA hydrolase"/>
    <property type="match status" value="1"/>
</dbReference>
<dbReference type="Gene3D" id="3.40.50.1470">
    <property type="entry name" value="Peptidyl-tRNA hydrolase"/>
    <property type="match status" value="1"/>
</dbReference>
<dbReference type="HAMAP" id="MF_00083">
    <property type="entry name" value="Pept_tRNA_hydro_bact"/>
    <property type="match status" value="1"/>
</dbReference>
<dbReference type="InterPro" id="IPR001328">
    <property type="entry name" value="Pept_tRNA_hydro"/>
</dbReference>
<dbReference type="InterPro" id="IPR018171">
    <property type="entry name" value="Pept_tRNA_hydro_CS"/>
</dbReference>
<dbReference type="InterPro" id="IPR036416">
    <property type="entry name" value="Pept_tRNA_hydro_sf"/>
</dbReference>
<dbReference type="NCBIfam" id="TIGR00447">
    <property type="entry name" value="pth"/>
    <property type="match status" value="1"/>
</dbReference>
<dbReference type="PANTHER" id="PTHR17224">
    <property type="entry name" value="PEPTIDYL-TRNA HYDROLASE"/>
    <property type="match status" value="1"/>
</dbReference>
<dbReference type="PANTHER" id="PTHR17224:SF1">
    <property type="entry name" value="PEPTIDYL-TRNA HYDROLASE"/>
    <property type="match status" value="1"/>
</dbReference>
<dbReference type="Pfam" id="PF01195">
    <property type="entry name" value="Pept_tRNA_hydro"/>
    <property type="match status" value="1"/>
</dbReference>
<dbReference type="SUPFAM" id="SSF53178">
    <property type="entry name" value="Peptidyl-tRNA hydrolase-like"/>
    <property type="match status" value="1"/>
</dbReference>
<dbReference type="PROSITE" id="PS01195">
    <property type="entry name" value="PEPT_TRNA_HYDROL_1"/>
    <property type="match status" value="1"/>
</dbReference>
<dbReference type="PROSITE" id="PS01196">
    <property type="entry name" value="PEPT_TRNA_HYDROL_2"/>
    <property type="match status" value="1"/>
</dbReference>
<protein>
    <recommendedName>
        <fullName evidence="1 3">Peptidyl-tRNA hydrolase</fullName>
        <shortName evidence="1">Pth</shortName>
        <ecNumber evidence="1">3.1.1.29</ecNumber>
    </recommendedName>
</protein>
<proteinExistence type="inferred from homology"/>
<organism>
    <name type="scientific">Pseudomonas aeruginosa (strain UCBPP-PA14)</name>
    <dbReference type="NCBI Taxonomy" id="208963"/>
    <lineage>
        <taxon>Bacteria</taxon>
        <taxon>Pseudomonadati</taxon>
        <taxon>Pseudomonadota</taxon>
        <taxon>Gammaproteobacteria</taxon>
        <taxon>Pseudomonadales</taxon>
        <taxon>Pseudomonadaceae</taxon>
        <taxon>Pseudomonas</taxon>
    </lineage>
</organism>
<feature type="chain" id="PRO_1000010631" description="Peptidyl-tRNA hydrolase">
    <location>
        <begin position="1"/>
        <end position="194"/>
    </location>
</feature>
<feature type="active site" description="Proton acceptor" evidence="1">
    <location>
        <position position="22"/>
    </location>
</feature>
<feature type="binding site" evidence="1">
    <location>
        <position position="17"/>
    </location>
    <ligand>
        <name>tRNA</name>
        <dbReference type="ChEBI" id="CHEBI:17843"/>
    </ligand>
</feature>
<feature type="binding site" evidence="1">
    <location>
        <position position="68"/>
    </location>
    <ligand>
        <name>tRNA</name>
        <dbReference type="ChEBI" id="CHEBI:17843"/>
    </ligand>
</feature>
<feature type="binding site" evidence="1">
    <location>
        <position position="70"/>
    </location>
    <ligand>
        <name>tRNA</name>
        <dbReference type="ChEBI" id="CHEBI:17843"/>
    </ligand>
</feature>
<feature type="binding site" evidence="1">
    <location>
        <position position="116"/>
    </location>
    <ligand>
        <name>tRNA</name>
        <dbReference type="ChEBI" id="CHEBI:17843"/>
    </ligand>
</feature>
<feature type="site" description="Discriminates between blocked and unblocked aminoacyl-tRNA" evidence="1">
    <location>
        <position position="12"/>
    </location>
</feature>
<feature type="site" description="Stabilizes the basic form of H active site to accept a proton" evidence="1">
    <location>
        <position position="95"/>
    </location>
</feature>
<keyword id="KW-0963">Cytoplasm</keyword>
<keyword id="KW-0378">Hydrolase</keyword>
<keyword id="KW-0694">RNA-binding</keyword>
<keyword id="KW-0820">tRNA-binding</keyword>
<keyword id="KW-0843">Virulence</keyword>
<gene>
    <name evidence="1 3" type="primary">pth</name>
    <name type="ordered locus">PA14_61790</name>
</gene>